<gene>
    <name type="primary">RpI1</name>
    <name type="synonym">RPA1</name>
    <name type="ORF">CG10122</name>
</gene>
<reference key="1">
    <citation type="journal article" date="1997" name="Mol. Gen. Genet.">
        <title>Identification of the gene coding for the largest subunit of RNA polymerase I (A) of Drosophila melanogaster.</title>
        <authorList>
            <person name="Knackmuss S."/>
            <person name="Bautz E.K.F."/>
            <person name="Petersen G."/>
        </authorList>
    </citation>
    <scope>NUCLEOTIDE SEQUENCE [GENOMIC DNA]</scope>
    <source>
        <strain>Oregon-R</strain>
    </source>
</reference>
<reference key="2">
    <citation type="journal article" date="2000" name="Science">
        <title>The genome sequence of Drosophila melanogaster.</title>
        <authorList>
            <person name="Adams M.D."/>
            <person name="Celniker S.E."/>
            <person name="Holt R.A."/>
            <person name="Evans C.A."/>
            <person name="Gocayne J.D."/>
            <person name="Amanatides P.G."/>
            <person name="Scherer S.E."/>
            <person name="Li P.W."/>
            <person name="Hoskins R.A."/>
            <person name="Galle R.F."/>
            <person name="George R.A."/>
            <person name="Lewis S.E."/>
            <person name="Richards S."/>
            <person name="Ashburner M."/>
            <person name="Henderson S.N."/>
            <person name="Sutton G.G."/>
            <person name="Wortman J.R."/>
            <person name="Yandell M.D."/>
            <person name="Zhang Q."/>
            <person name="Chen L.X."/>
            <person name="Brandon R.C."/>
            <person name="Rogers Y.-H.C."/>
            <person name="Blazej R.G."/>
            <person name="Champe M."/>
            <person name="Pfeiffer B.D."/>
            <person name="Wan K.H."/>
            <person name="Doyle C."/>
            <person name="Baxter E.G."/>
            <person name="Helt G."/>
            <person name="Nelson C.R."/>
            <person name="Miklos G.L.G."/>
            <person name="Abril J.F."/>
            <person name="Agbayani A."/>
            <person name="An H.-J."/>
            <person name="Andrews-Pfannkoch C."/>
            <person name="Baldwin D."/>
            <person name="Ballew R.M."/>
            <person name="Basu A."/>
            <person name="Baxendale J."/>
            <person name="Bayraktaroglu L."/>
            <person name="Beasley E.M."/>
            <person name="Beeson K.Y."/>
            <person name="Benos P.V."/>
            <person name="Berman B.P."/>
            <person name="Bhandari D."/>
            <person name="Bolshakov S."/>
            <person name="Borkova D."/>
            <person name="Botchan M.R."/>
            <person name="Bouck J."/>
            <person name="Brokstein P."/>
            <person name="Brottier P."/>
            <person name="Burtis K.C."/>
            <person name="Busam D.A."/>
            <person name="Butler H."/>
            <person name="Cadieu E."/>
            <person name="Center A."/>
            <person name="Chandra I."/>
            <person name="Cherry J.M."/>
            <person name="Cawley S."/>
            <person name="Dahlke C."/>
            <person name="Davenport L.B."/>
            <person name="Davies P."/>
            <person name="de Pablos B."/>
            <person name="Delcher A."/>
            <person name="Deng Z."/>
            <person name="Mays A.D."/>
            <person name="Dew I."/>
            <person name="Dietz S.M."/>
            <person name="Dodson K."/>
            <person name="Doup L.E."/>
            <person name="Downes M."/>
            <person name="Dugan-Rocha S."/>
            <person name="Dunkov B.C."/>
            <person name="Dunn P."/>
            <person name="Durbin K.J."/>
            <person name="Evangelista C.C."/>
            <person name="Ferraz C."/>
            <person name="Ferriera S."/>
            <person name="Fleischmann W."/>
            <person name="Fosler C."/>
            <person name="Gabrielian A.E."/>
            <person name="Garg N.S."/>
            <person name="Gelbart W.M."/>
            <person name="Glasser K."/>
            <person name="Glodek A."/>
            <person name="Gong F."/>
            <person name="Gorrell J.H."/>
            <person name="Gu Z."/>
            <person name="Guan P."/>
            <person name="Harris M."/>
            <person name="Harris N.L."/>
            <person name="Harvey D.A."/>
            <person name="Heiman T.J."/>
            <person name="Hernandez J.R."/>
            <person name="Houck J."/>
            <person name="Hostin D."/>
            <person name="Houston K.A."/>
            <person name="Howland T.J."/>
            <person name="Wei M.-H."/>
            <person name="Ibegwam C."/>
            <person name="Jalali M."/>
            <person name="Kalush F."/>
            <person name="Karpen G.H."/>
            <person name="Ke Z."/>
            <person name="Kennison J.A."/>
            <person name="Ketchum K.A."/>
            <person name="Kimmel B.E."/>
            <person name="Kodira C.D."/>
            <person name="Kraft C.L."/>
            <person name="Kravitz S."/>
            <person name="Kulp D."/>
            <person name="Lai Z."/>
            <person name="Lasko P."/>
            <person name="Lei Y."/>
            <person name="Levitsky A.A."/>
            <person name="Li J.H."/>
            <person name="Li Z."/>
            <person name="Liang Y."/>
            <person name="Lin X."/>
            <person name="Liu X."/>
            <person name="Mattei B."/>
            <person name="McIntosh T.C."/>
            <person name="McLeod M.P."/>
            <person name="McPherson D."/>
            <person name="Merkulov G."/>
            <person name="Milshina N.V."/>
            <person name="Mobarry C."/>
            <person name="Morris J."/>
            <person name="Moshrefi A."/>
            <person name="Mount S.M."/>
            <person name="Moy M."/>
            <person name="Murphy B."/>
            <person name="Murphy L."/>
            <person name="Muzny D.M."/>
            <person name="Nelson D.L."/>
            <person name="Nelson D.R."/>
            <person name="Nelson K.A."/>
            <person name="Nixon K."/>
            <person name="Nusskern D.R."/>
            <person name="Pacleb J.M."/>
            <person name="Palazzolo M."/>
            <person name="Pittman G.S."/>
            <person name="Pan S."/>
            <person name="Pollard J."/>
            <person name="Puri V."/>
            <person name="Reese M.G."/>
            <person name="Reinert K."/>
            <person name="Remington K."/>
            <person name="Saunders R.D.C."/>
            <person name="Scheeler F."/>
            <person name="Shen H."/>
            <person name="Shue B.C."/>
            <person name="Siden-Kiamos I."/>
            <person name="Simpson M."/>
            <person name="Skupski M.P."/>
            <person name="Smith T.J."/>
            <person name="Spier E."/>
            <person name="Spradling A.C."/>
            <person name="Stapleton M."/>
            <person name="Strong R."/>
            <person name="Sun E."/>
            <person name="Svirskas R."/>
            <person name="Tector C."/>
            <person name="Turner R."/>
            <person name="Venter E."/>
            <person name="Wang A.H."/>
            <person name="Wang X."/>
            <person name="Wang Z.-Y."/>
            <person name="Wassarman D.A."/>
            <person name="Weinstock G.M."/>
            <person name="Weissenbach J."/>
            <person name="Williams S.M."/>
            <person name="Woodage T."/>
            <person name="Worley K.C."/>
            <person name="Wu D."/>
            <person name="Yang S."/>
            <person name="Yao Q.A."/>
            <person name="Ye J."/>
            <person name="Yeh R.-F."/>
            <person name="Zaveri J.S."/>
            <person name="Zhan M."/>
            <person name="Zhang G."/>
            <person name="Zhao Q."/>
            <person name="Zheng L."/>
            <person name="Zheng X.H."/>
            <person name="Zhong F.N."/>
            <person name="Zhong W."/>
            <person name="Zhou X."/>
            <person name="Zhu S.C."/>
            <person name="Zhu X."/>
            <person name="Smith H.O."/>
            <person name="Gibbs R.A."/>
            <person name="Myers E.W."/>
            <person name="Rubin G.M."/>
            <person name="Venter J.C."/>
        </authorList>
    </citation>
    <scope>NUCLEOTIDE SEQUENCE [LARGE SCALE GENOMIC DNA]</scope>
    <source>
        <strain>Berkeley</strain>
    </source>
</reference>
<reference key="3">
    <citation type="journal article" date="2002" name="Genome Biol.">
        <title>Annotation of the Drosophila melanogaster euchromatic genome: a systematic review.</title>
        <authorList>
            <person name="Misra S."/>
            <person name="Crosby M.A."/>
            <person name="Mungall C.J."/>
            <person name="Matthews B.B."/>
            <person name="Campbell K.S."/>
            <person name="Hradecky P."/>
            <person name="Huang Y."/>
            <person name="Kaminker J.S."/>
            <person name="Millburn G.H."/>
            <person name="Prochnik S.E."/>
            <person name="Smith C.D."/>
            <person name="Tupy J.L."/>
            <person name="Whitfield E.J."/>
            <person name="Bayraktaroglu L."/>
            <person name="Berman B.P."/>
            <person name="Bettencourt B.R."/>
            <person name="Celniker S.E."/>
            <person name="de Grey A.D.N.J."/>
            <person name="Drysdale R.A."/>
            <person name="Harris N.L."/>
            <person name="Richter J."/>
            <person name="Russo S."/>
            <person name="Schroeder A.J."/>
            <person name="Shu S.Q."/>
            <person name="Stapleton M."/>
            <person name="Yamada C."/>
            <person name="Ashburner M."/>
            <person name="Gelbart W.M."/>
            <person name="Rubin G.M."/>
            <person name="Lewis S.E."/>
        </authorList>
    </citation>
    <scope>GENOME REANNOTATION</scope>
    <source>
        <strain>Berkeley</strain>
    </source>
</reference>
<reference key="4">
    <citation type="journal article" date="2002" name="Genome Biol.">
        <title>A Drosophila full-length cDNA resource.</title>
        <authorList>
            <person name="Stapleton M."/>
            <person name="Carlson J.W."/>
            <person name="Brokstein P."/>
            <person name="Yu C."/>
            <person name="Champe M."/>
            <person name="George R.A."/>
            <person name="Guarin H."/>
            <person name="Kronmiller B."/>
            <person name="Pacleb J.M."/>
            <person name="Park S."/>
            <person name="Wan K.H."/>
            <person name="Rubin G.M."/>
            <person name="Celniker S.E."/>
        </authorList>
    </citation>
    <scope>NUCLEOTIDE SEQUENCE [LARGE SCALE MRNA]</scope>
    <source>
        <strain>Berkeley</strain>
        <tissue>Ovary</tissue>
    </source>
</reference>
<reference key="5">
    <citation type="journal article" date="2008" name="J. Proteome Res.">
        <title>Phosphoproteome analysis of Drosophila melanogaster embryos.</title>
        <authorList>
            <person name="Zhai B."/>
            <person name="Villen J."/>
            <person name="Beausoleil S.A."/>
            <person name="Mintseris J."/>
            <person name="Gygi S.P."/>
        </authorList>
    </citation>
    <scope>PHOSPHORYLATION [LARGE SCALE ANALYSIS] AT SER-1364 AND SER-1365</scope>
    <scope>IDENTIFICATION BY MASS SPECTROMETRY</scope>
    <source>
        <tissue>Embryo</tissue>
    </source>
</reference>
<organism>
    <name type="scientific">Drosophila melanogaster</name>
    <name type="common">Fruit fly</name>
    <dbReference type="NCBI Taxonomy" id="7227"/>
    <lineage>
        <taxon>Eukaryota</taxon>
        <taxon>Metazoa</taxon>
        <taxon>Ecdysozoa</taxon>
        <taxon>Arthropoda</taxon>
        <taxon>Hexapoda</taxon>
        <taxon>Insecta</taxon>
        <taxon>Pterygota</taxon>
        <taxon>Neoptera</taxon>
        <taxon>Endopterygota</taxon>
        <taxon>Diptera</taxon>
        <taxon>Brachycera</taxon>
        <taxon>Muscomorpha</taxon>
        <taxon>Ephydroidea</taxon>
        <taxon>Drosophilidae</taxon>
        <taxon>Drosophila</taxon>
        <taxon>Sophophora</taxon>
    </lineage>
</organism>
<protein>
    <recommendedName>
        <fullName>DNA-directed RNA polymerase I subunit RPA1</fullName>
        <shortName>RNA polymerase I subunit A1</shortName>
        <ecNumber>2.7.7.6</ecNumber>
    </recommendedName>
    <alternativeName>
        <fullName>DNA-directed RNA polymerase I largest subunit</fullName>
    </alternativeName>
    <alternativeName>
        <fullName>DNA-directed RNA polymerase I subunit A</fullName>
    </alternativeName>
</protein>
<comment type="function">
    <text evidence="1">DNA-dependent RNA polymerase catalyzes the transcription of DNA into RNA using the four ribonucleoside triphosphates as substrates. Largest and catalytic core component of RNA polymerase I which synthesizes ribosomal RNA precursors. Forms the polymerase active center together with the second largest subunit. A single stranded DNA template strand of the promoter is positioned within the central active site cleft of Pol I. A bridging helix emanates from RPA1 and crosses the cleft near the catalytic site and is thought to promote translocation of Pol I by acting as a ratchet that moves the RNA-DNA hybrid through the active site by switching from straight to bent conformations at each step of nucleotide addition (By similarity).</text>
</comment>
<comment type="catalytic activity">
    <reaction>
        <text>RNA(n) + a ribonucleoside 5'-triphosphate = RNA(n+1) + diphosphate</text>
        <dbReference type="Rhea" id="RHEA:21248"/>
        <dbReference type="Rhea" id="RHEA-COMP:14527"/>
        <dbReference type="Rhea" id="RHEA-COMP:17342"/>
        <dbReference type="ChEBI" id="CHEBI:33019"/>
        <dbReference type="ChEBI" id="CHEBI:61557"/>
        <dbReference type="ChEBI" id="CHEBI:140395"/>
        <dbReference type="EC" id="2.7.7.6"/>
    </reaction>
</comment>
<comment type="subunit">
    <text evidence="1">Component of the RNA polymerase I (Pol I) complex consisting of at least 13 subunits.</text>
</comment>
<comment type="subcellular location">
    <subcellularLocation>
        <location evidence="1">Nucleus</location>
        <location evidence="1">Nucleolus</location>
    </subcellularLocation>
</comment>
<comment type="PTM">
    <text evidence="1">Phosphorylated.</text>
</comment>
<comment type="similarity">
    <text evidence="4">Belongs to the RNA polymerase beta' chain family.</text>
</comment>
<evidence type="ECO:0000250" key="1"/>
<evidence type="ECO:0000256" key="2">
    <source>
        <dbReference type="SAM" id="MobiDB-lite"/>
    </source>
</evidence>
<evidence type="ECO:0000269" key="3">
    <source>
    </source>
</evidence>
<evidence type="ECO:0000305" key="4"/>
<keyword id="KW-0240">DNA-directed RNA polymerase</keyword>
<keyword id="KW-0460">Magnesium</keyword>
<keyword id="KW-0479">Metal-binding</keyword>
<keyword id="KW-0548">Nucleotidyltransferase</keyword>
<keyword id="KW-0539">Nucleus</keyword>
<keyword id="KW-0597">Phosphoprotein</keyword>
<keyword id="KW-1185">Reference proteome</keyword>
<keyword id="KW-0804">Transcription</keyword>
<keyword id="KW-0808">Transferase</keyword>
<keyword id="KW-0862">Zinc</keyword>
<name>RPA1_DROME</name>
<proteinExistence type="evidence at protein level"/>
<sequence>MGSKRAMDVHMFPSDLEFAVFTDQEIRKLSVVKVITGITFDALGHAIPGGLYDIRMGSYGRCMDPCGTCLKLQDCPGHMGHIELGTPVYNPFFIKFVQRLLCIFCLHCYKLQMKDHECEIIMLQLRLIDAGYIIEAQELELFKSEIVCQNTENLVAIKNGDMVHPHIAAMYKLLEKNEKNSSNSTKTSCSLRTAITHSALQRLGKKCRHCNKSMRFVRYMHRRLVFYVTLADIKERVGTGAETGGQNKVIFADECRRYLRQIYANYPELLKLLVPVLGLSNTDLTQGDRSPVDLFFMDTLPVTPPRARPLNMVGDMLKGNPQTDIYINIIENNHVLNVVLKYMKGGQEKLTEEAKAAYQTLKGETAHEKLYTAWLALQMSVDVLLDVNMSREMKSGEGLKQIIEKKSGLIRSHMMGKRVNYAARTVITPDPNINVDEIGIPDIFAKKLSYPVPVTEWNVTELRKMVMNGPDVHPGANYIQDKNGFTTYIPADNASKRESLAKLLLSNPKDGIKIVHRHVLNGDVLLLNRQPSLHKPSIMGHKARILHGEKTFRLHYSNCKAYNADFDGDEMNAHYPQSEVARAEAYNLVNVASNYLVPKDGTPLGGLIQDHVISGVKLSIRGRFFNREDYQQLVFQGLSQLKKDIKLLPPTILKPAVLWSGKQILSTIIINIIPEGYERINLDSFAKIAGKNWNVSRPRPPICGTNPEGNDLSESQVQIRNGELLVGVLDKQQYGATTYGLIHCMYELYGGDVSTLLLTAFTKVFTFFLQLEGFTLGVKDILVTDVADRKRRKIIRECRNVGNSAVAAALELEDEPPHDELVEKMEAAYVKDSKFRVLLDRKYKSLLDGYTNDINSTCLPRGLITKFPSNNLQLMVLSGAKGSMVNTMQISCLLGQIELEGKRPPLMISGKSLPSFTSFETSPKSGGFIDGRFMTGIQPQDFFFHCMAGREGLIDTAVKTSRSGYLQRCLIKHLEGLSVHYDLTVRDSDNSVVQFLYGEDGLDILKSKFFNDKFCADFLTQNATAILRPAQLQLMKDEEQLAKVQRHEKHIRSWEKKKPAKLRAAFTHFSEELREEVEVKRPNEINSKTGRRRFDEGLLKLWKKADAEDKALYRKKYARCPDPTVAVYKQDLYYGSVSERTRKLITDYAKRKPALKETIADIMRVKTIKSLAAPGEPVGLIAAQSIGEPSTQMTLNTFHFAGRGEMNVTLGIPRLREILMLASSNIKTPSMDIPIKPGQQHQAEKLRINLNSVTLANLLEYVHVSTGLTLDPERSYEYDMRFQFLPREVYKEDYGVRPKHIIKYMHQTFFKQLIRAILKVSNASRTTKIVVIDDKKDADKDDDNDLDNGDEVGRSKAKANDDDSSDDNDDDDATGVKLKQRKTDEKDYDDPDDVEELHDANDDDDEAEDEDDEEKGQDGNDNDGDDKAVERLLSNDMVKAYTYDKENHLWCQVKLNLSVRYQKPDLTSIIRELAGKSVVHQVQHIKRAIIYKGNDDDQLLKTDGINIGEMFQHNKILDLNRLYSNDIHAIARTYGIEAASQVIVKEVSNVFKVYGITVDRRHLSLIADYMTFDGTFQPLSRKGMEHSSSPLQQMSFESSLQFLKSAAGFGRADELSSPSSRLMVGLPVRNGTGAFELLTKIC</sequence>
<feature type="chain" id="PRO_0000073926" description="DNA-directed RNA polymerase I subunit RPA1">
    <location>
        <begin position="1"/>
        <end position="1642"/>
    </location>
</feature>
<feature type="region of interest" description="Bridging helix" evidence="1">
    <location>
        <begin position="939"/>
        <end position="951"/>
    </location>
</feature>
<feature type="region of interest" description="Disordered" evidence="2">
    <location>
        <begin position="1337"/>
        <end position="1428"/>
    </location>
</feature>
<feature type="compositionally biased region" description="Acidic residues" evidence="2">
    <location>
        <begin position="1340"/>
        <end position="1350"/>
    </location>
</feature>
<feature type="compositionally biased region" description="Basic and acidic residues" evidence="2">
    <location>
        <begin position="1351"/>
        <end position="1361"/>
    </location>
</feature>
<feature type="compositionally biased region" description="Acidic residues" evidence="2">
    <location>
        <begin position="1362"/>
        <end position="1373"/>
    </location>
</feature>
<feature type="compositionally biased region" description="Acidic residues" evidence="2">
    <location>
        <begin position="1386"/>
        <end position="1424"/>
    </location>
</feature>
<feature type="binding site" evidence="1">
    <location>
        <position position="66"/>
    </location>
    <ligand>
        <name>Zn(2+)</name>
        <dbReference type="ChEBI" id="CHEBI:29105"/>
    </ligand>
</feature>
<feature type="binding site" evidence="1">
    <location>
        <position position="69"/>
    </location>
    <ligand>
        <name>Zn(2+)</name>
        <dbReference type="ChEBI" id="CHEBI:29105"/>
    </ligand>
</feature>
<feature type="binding site" evidence="1">
    <location>
        <position position="75"/>
    </location>
    <ligand>
        <name>Zn(2+)</name>
        <dbReference type="ChEBI" id="CHEBI:29105"/>
    </ligand>
</feature>
<feature type="binding site" evidence="1">
    <location>
        <position position="78"/>
    </location>
    <ligand>
        <name>Zn(2+)</name>
        <dbReference type="ChEBI" id="CHEBI:29105"/>
    </ligand>
</feature>
<feature type="binding site" evidence="1">
    <location>
        <position position="565"/>
    </location>
    <ligand>
        <name>Mg(2+)</name>
        <dbReference type="ChEBI" id="CHEBI:18420"/>
        <note>catalytic</note>
    </ligand>
</feature>
<feature type="binding site" evidence="1">
    <location>
        <position position="567"/>
    </location>
    <ligand>
        <name>Mg(2+)</name>
        <dbReference type="ChEBI" id="CHEBI:18420"/>
        <note>catalytic</note>
    </ligand>
</feature>
<feature type="binding site" evidence="1">
    <location>
        <position position="569"/>
    </location>
    <ligand>
        <name>Mg(2+)</name>
        <dbReference type="ChEBI" id="CHEBI:18420"/>
        <note>catalytic</note>
    </ligand>
</feature>
<feature type="modified residue" description="Phosphoserine" evidence="3">
    <location>
        <position position="1364"/>
    </location>
</feature>
<feature type="modified residue" description="Phosphoserine" evidence="3">
    <location>
        <position position="1365"/>
    </location>
</feature>
<feature type="sequence conflict" description="In Ref. 1; CAA70321." evidence="4" ref="1">
    <original>S</original>
    <variation>C</variation>
    <location>
        <position position="407"/>
    </location>
</feature>
<feature type="sequence conflict" description="In Ref. 1; CAA70321." evidence="4" ref="1">
    <original>D</original>
    <variation>AY</variation>
    <location>
        <position position="430"/>
    </location>
</feature>
<feature type="sequence conflict" description="In Ref. 1; CAA70321." evidence="4" ref="1">
    <original>EL</original>
    <variation>DV</variation>
    <location>
        <begin position="461"/>
        <end position="462"/>
    </location>
</feature>
<feature type="sequence conflict" description="In Ref. 1; CAA70321." evidence="4" ref="1">
    <original>L</original>
    <variation>V</variation>
    <location>
        <position position="758"/>
    </location>
</feature>
<feature type="sequence conflict" description="In Ref. 1; CAA70321." evidence="4" ref="1">
    <original>A</original>
    <variation>V</variation>
    <location>
        <position position="1042"/>
    </location>
</feature>
<feature type="sequence conflict" description="In Ref. 1; CAA70321." evidence="4" ref="1">
    <original>I</original>
    <variation>V</variation>
    <location>
        <position position="1085"/>
    </location>
</feature>
<feature type="sequence conflict" description="In Ref. 1." evidence="4" ref="1">
    <original>RA</original>
    <variation>PPP</variation>
    <location>
        <begin position="1315"/>
        <end position="1316"/>
    </location>
</feature>
<feature type="sequence conflict" description="In Ref. 2; AAF58234." evidence="4" ref="2">
    <original>D</original>
    <variation>E</variation>
    <location>
        <position position="1341"/>
    </location>
</feature>
<feature type="sequence conflict" description="In Ref. 2; AAF58234." evidence="4" ref="2">
    <original>N</original>
    <variation>T</variation>
    <location>
        <position position="1494"/>
    </location>
</feature>
<accession>P91875</accession>
<accession>Q8MRE2</accession>
<accession>Q9V732</accession>
<dbReference type="EC" id="2.7.7.6"/>
<dbReference type="EMBL" id="Y09103">
    <property type="protein sequence ID" value="CAA70321.1"/>
    <property type="molecule type" value="Genomic_DNA"/>
</dbReference>
<dbReference type="EMBL" id="AE013599">
    <property type="protein sequence ID" value="AAF58234.1"/>
    <property type="molecule type" value="Genomic_DNA"/>
</dbReference>
<dbReference type="EMBL" id="AY121632">
    <property type="protein sequence ID" value="AAM51959.1"/>
    <property type="molecule type" value="mRNA"/>
</dbReference>
<dbReference type="PIR" id="T13803">
    <property type="entry name" value="T13803"/>
</dbReference>
<dbReference type="RefSeq" id="NP_523743.1">
    <property type="nucleotide sequence ID" value="NM_079019.3"/>
</dbReference>
<dbReference type="SMR" id="P91875"/>
<dbReference type="BioGRID" id="62365">
    <property type="interactions" value="6"/>
</dbReference>
<dbReference type="ComplexPortal" id="CPX-2602">
    <property type="entry name" value="DNA-directed RNA polymerase I complex"/>
</dbReference>
<dbReference type="FunCoup" id="P91875">
    <property type="interactions" value="1606"/>
</dbReference>
<dbReference type="IntAct" id="P91875">
    <property type="interactions" value="5"/>
</dbReference>
<dbReference type="STRING" id="7227.FBpp0086640"/>
<dbReference type="GlyGen" id="P91875">
    <property type="glycosylation" value="2 sites"/>
</dbReference>
<dbReference type="iPTMnet" id="P91875"/>
<dbReference type="PaxDb" id="7227-FBpp0086640"/>
<dbReference type="EnsemblMetazoa" id="FBtr0087511">
    <property type="protein sequence ID" value="FBpp0086640"/>
    <property type="gene ID" value="FBgn0019938"/>
</dbReference>
<dbReference type="GeneID" id="36617"/>
<dbReference type="KEGG" id="dme:Dmel_CG10122"/>
<dbReference type="AGR" id="FB:FBgn0019938"/>
<dbReference type="CTD" id="25885"/>
<dbReference type="FlyBase" id="FBgn0019938">
    <property type="gene designation" value="RpI1"/>
</dbReference>
<dbReference type="VEuPathDB" id="VectorBase:FBgn0019938"/>
<dbReference type="eggNOG" id="KOG0262">
    <property type="taxonomic scope" value="Eukaryota"/>
</dbReference>
<dbReference type="GeneTree" id="ENSGT00920000149138"/>
<dbReference type="HOGENOM" id="CLU_000487_2_2_1"/>
<dbReference type="InParanoid" id="P91875"/>
<dbReference type="OrthoDB" id="270392at2759"/>
<dbReference type="PhylomeDB" id="P91875"/>
<dbReference type="Reactome" id="R-DME-73762">
    <property type="pathway name" value="RNA Polymerase I Transcription Initiation"/>
</dbReference>
<dbReference type="Reactome" id="R-DME-73772">
    <property type="pathway name" value="RNA Polymerase I Promoter Escape"/>
</dbReference>
<dbReference type="SignaLink" id="P91875"/>
<dbReference type="BioGRID-ORCS" id="36617">
    <property type="hits" value="1 hit in 1 CRISPR screen"/>
</dbReference>
<dbReference type="ChiTaRS" id="RpI1">
    <property type="organism name" value="fly"/>
</dbReference>
<dbReference type="GenomeRNAi" id="36617"/>
<dbReference type="PRO" id="PR:P91875"/>
<dbReference type="Proteomes" id="UP000000803">
    <property type="component" value="Chromosome 2R"/>
</dbReference>
<dbReference type="Bgee" id="FBgn0019938">
    <property type="expression patterns" value="Expressed in eye disc (Drosophila) and 60 other cell types or tissues"/>
</dbReference>
<dbReference type="GO" id="GO:0005739">
    <property type="term" value="C:mitochondrion"/>
    <property type="evidence" value="ECO:0007669"/>
    <property type="project" value="GOC"/>
</dbReference>
<dbReference type="GO" id="GO:0005736">
    <property type="term" value="C:RNA polymerase I complex"/>
    <property type="evidence" value="ECO:0000250"/>
    <property type="project" value="FlyBase"/>
</dbReference>
<dbReference type="GO" id="GO:0003677">
    <property type="term" value="F:DNA binding"/>
    <property type="evidence" value="ECO:0007669"/>
    <property type="project" value="InterPro"/>
</dbReference>
<dbReference type="GO" id="GO:0003899">
    <property type="term" value="F:DNA-directed RNA polymerase activity"/>
    <property type="evidence" value="ECO:0007669"/>
    <property type="project" value="UniProtKB-EC"/>
</dbReference>
<dbReference type="GO" id="GO:0046872">
    <property type="term" value="F:metal ion binding"/>
    <property type="evidence" value="ECO:0007669"/>
    <property type="project" value="UniProtKB-KW"/>
</dbReference>
<dbReference type="GO" id="GO:0006360">
    <property type="term" value="P:transcription by RNA polymerase I"/>
    <property type="evidence" value="ECO:0000250"/>
    <property type="project" value="FlyBase"/>
</dbReference>
<dbReference type="CDD" id="cd00084">
    <property type="entry name" value="HMG-box_SF"/>
    <property type="match status" value="1"/>
</dbReference>
<dbReference type="CDD" id="cd02735">
    <property type="entry name" value="RNAP_I_Rpa1_C"/>
    <property type="match status" value="1"/>
</dbReference>
<dbReference type="CDD" id="cd01435">
    <property type="entry name" value="RNAP_I_RPA1_N"/>
    <property type="match status" value="1"/>
</dbReference>
<dbReference type="FunFam" id="2.40.40.20:FF:000019">
    <property type="entry name" value="DNA-directed RNA polymerase II subunit RPB1"/>
    <property type="match status" value="1"/>
</dbReference>
<dbReference type="FunFam" id="1.10.274.100:FF:000012">
    <property type="entry name" value="DNA-directed RNA polymerase subunit"/>
    <property type="match status" value="1"/>
</dbReference>
<dbReference type="FunFam" id="3.30.70.2850:FF:000006">
    <property type="entry name" value="DNA-directed RNA polymerase subunit"/>
    <property type="match status" value="1"/>
</dbReference>
<dbReference type="FunFam" id="4.10.860.120:FF:000014">
    <property type="entry name" value="DNA-directed RNA polymerase subunit"/>
    <property type="match status" value="1"/>
</dbReference>
<dbReference type="Gene3D" id="1.10.132.30">
    <property type="match status" value="1"/>
</dbReference>
<dbReference type="Gene3D" id="2.40.40.20">
    <property type="match status" value="1"/>
</dbReference>
<dbReference type="Gene3D" id="3.30.70.2850">
    <property type="match status" value="1"/>
</dbReference>
<dbReference type="Gene3D" id="6.10.250.2940">
    <property type="match status" value="1"/>
</dbReference>
<dbReference type="Gene3D" id="6.20.50.80">
    <property type="match status" value="1"/>
</dbReference>
<dbReference type="Gene3D" id="3.30.1490.180">
    <property type="entry name" value="RNA polymerase ii"/>
    <property type="match status" value="1"/>
</dbReference>
<dbReference type="Gene3D" id="4.10.860.120">
    <property type="entry name" value="RNA polymerase II, clamp domain"/>
    <property type="match status" value="1"/>
</dbReference>
<dbReference type="Gene3D" id="1.10.274.100">
    <property type="entry name" value="RNA polymerase Rpb1, domain 3"/>
    <property type="match status" value="1"/>
</dbReference>
<dbReference type="InterPro" id="IPR047107">
    <property type="entry name" value="DNA-dir_RNA_pol1_lsu_C"/>
</dbReference>
<dbReference type="InterPro" id="IPR015699">
    <property type="entry name" value="DNA-dir_RNA_pol1_lsu_N"/>
</dbReference>
<dbReference type="InterPro" id="IPR045867">
    <property type="entry name" value="DNA-dir_RpoC_beta_prime"/>
</dbReference>
<dbReference type="InterPro" id="IPR000722">
    <property type="entry name" value="RNA_pol_asu"/>
</dbReference>
<dbReference type="InterPro" id="IPR006592">
    <property type="entry name" value="RNA_pol_N"/>
</dbReference>
<dbReference type="InterPro" id="IPR007080">
    <property type="entry name" value="RNA_pol_Rpb1_1"/>
</dbReference>
<dbReference type="InterPro" id="IPR007066">
    <property type="entry name" value="RNA_pol_Rpb1_3"/>
</dbReference>
<dbReference type="InterPro" id="IPR042102">
    <property type="entry name" value="RNA_pol_Rpb1_3_sf"/>
</dbReference>
<dbReference type="InterPro" id="IPR007083">
    <property type="entry name" value="RNA_pol_Rpb1_4"/>
</dbReference>
<dbReference type="InterPro" id="IPR007081">
    <property type="entry name" value="RNA_pol_Rpb1_5"/>
</dbReference>
<dbReference type="InterPro" id="IPR044893">
    <property type="entry name" value="RNA_pol_Rpb1_clamp_domain"/>
</dbReference>
<dbReference type="InterPro" id="IPR038120">
    <property type="entry name" value="Rpb1_funnel_sf"/>
</dbReference>
<dbReference type="PANTHER" id="PTHR19376">
    <property type="entry name" value="DNA-DIRECTED RNA POLYMERASE"/>
    <property type="match status" value="1"/>
</dbReference>
<dbReference type="PANTHER" id="PTHR19376:SF11">
    <property type="entry name" value="DNA-DIRECTED RNA POLYMERASE I SUBUNIT RPA1"/>
    <property type="match status" value="1"/>
</dbReference>
<dbReference type="Pfam" id="PF04997">
    <property type="entry name" value="RNA_pol_Rpb1_1"/>
    <property type="match status" value="1"/>
</dbReference>
<dbReference type="Pfam" id="PF00623">
    <property type="entry name" value="RNA_pol_Rpb1_2"/>
    <property type="match status" value="1"/>
</dbReference>
<dbReference type="Pfam" id="PF04983">
    <property type="entry name" value="RNA_pol_Rpb1_3"/>
    <property type="match status" value="1"/>
</dbReference>
<dbReference type="Pfam" id="PF05000">
    <property type="entry name" value="RNA_pol_Rpb1_4"/>
    <property type="match status" value="1"/>
</dbReference>
<dbReference type="Pfam" id="PF04998">
    <property type="entry name" value="RNA_pol_Rpb1_5"/>
    <property type="match status" value="1"/>
</dbReference>
<dbReference type="SMART" id="SM00663">
    <property type="entry name" value="RPOLA_N"/>
    <property type="match status" value="1"/>
</dbReference>
<dbReference type="SUPFAM" id="SSF64484">
    <property type="entry name" value="beta and beta-prime subunits of DNA dependent RNA-polymerase"/>
    <property type="match status" value="1"/>
</dbReference>